<feature type="chain" id="PRO_0000064442" description="Cellulose synthase operon protein D">
    <location>
        <begin position="1"/>
        <end position="156"/>
    </location>
</feature>
<feature type="helix" evidence="1">
    <location>
        <begin position="11"/>
        <end position="41"/>
    </location>
</feature>
<feature type="turn" evidence="1">
    <location>
        <begin position="42"/>
        <end position="44"/>
    </location>
</feature>
<feature type="helix" evidence="1">
    <location>
        <begin position="53"/>
        <end position="67"/>
    </location>
</feature>
<feature type="strand" evidence="1">
    <location>
        <begin position="71"/>
        <end position="76"/>
    </location>
</feature>
<feature type="turn" evidence="1">
    <location>
        <begin position="78"/>
        <end position="80"/>
    </location>
</feature>
<feature type="strand" evidence="1">
    <location>
        <begin position="81"/>
        <end position="88"/>
    </location>
</feature>
<feature type="turn" evidence="1">
    <location>
        <begin position="97"/>
        <end position="101"/>
    </location>
</feature>
<feature type="helix" evidence="1">
    <location>
        <begin position="105"/>
        <end position="117"/>
    </location>
</feature>
<feature type="strand" evidence="2">
    <location>
        <begin position="119"/>
        <end position="122"/>
    </location>
</feature>
<feature type="strand" evidence="2">
    <location>
        <begin position="126"/>
        <end position="130"/>
    </location>
</feature>
<feature type="helix" evidence="1">
    <location>
        <begin position="132"/>
        <end position="135"/>
    </location>
</feature>
<feature type="turn" evidence="1">
    <location>
        <begin position="136"/>
        <end position="139"/>
    </location>
</feature>
<feature type="strand" evidence="1">
    <location>
        <begin position="145"/>
        <end position="153"/>
    </location>
</feature>
<sequence>MTIFEKKPDFTLFLQTLSWEIDDQVGIEVRNELLREVGRGMGTRIMPPPCQTVDKLQIELNALLALIGWGTVTLELLSEDQSLRIVHENLPQVGSAGEPSGTWLAPVLEGLYGRWVTSQAGAFGDYVVTRDVDAEDLNAVPRQTIIMYMRVRSSAT</sequence>
<proteinExistence type="evidence at protein level"/>
<gene>
    <name type="primary">acsD</name>
</gene>
<comment type="function">
    <text>May have a major role in the perfection of crystallization, involved either in the pore structure itself or in the organization of the pores within the linear array of terminal synthesizing complexes (TCs).</text>
</comment>
<comment type="pathway">
    <text>Glycan metabolism; bacterial cellulose biosynthesis.</text>
</comment>
<comment type="interaction">
    <interactant intactId="EBI-15882347">
        <id>P37719</id>
    </interactant>
    <interactant intactId="EBI-15882347">
        <id>P37719</id>
        <label>acsD</label>
    </interactant>
    <organismsDiffer>false</organismsDiffer>
    <experiments>3</experiments>
</comment>
<evidence type="ECO:0007829" key="1">
    <source>
        <dbReference type="PDB" id="3AJ1"/>
    </source>
</evidence>
<evidence type="ECO:0007829" key="2">
    <source>
        <dbReference type="PDB" id="3AJ2"/>
    </source>
</evidence>
<name>ACSD_KOMXY</name>
<reference key="1">
    <citation type="journal article" date="1994" name="J. Bacteriol.">
        <title>Characterization of genes in the cellulose-synthesizing operon (acs operon) of Acetobacter xylinum: implications for cellulose crystallization.</title>
        <authorList>
            <person name="Saxena I.M."/>
            <person name="Kudlicka K."/>
            <person name="Okuda K."/>
            <person name="Brown R.M. Jr."/>
        </authorList>
    </citation>
    <scope>NUCLEOTIDE SEQUENCE [GENOMIC DNA]</scope>
    <source>
        <strain>ATCC 53582 / NQ5</strain>
    </source>
</reference>
<keyword id="KW-0002">3D-structure</keyword>
<keyword id="KW-0135">Cellulose biosynthesis</keyword>
<accession>P37719</accession>
<organism>
    <name type="scientific">Komagataeibacter xylinus</name>
    <name type="common">Gluconacetobacter xylinus</name>
    <dbReference type="NCBI Taxonomy" id="28448"/>
    <lineage>
        <taxon>Bacteria</taxon>
        <taxon>Pseudomonadati</taxon>
        <taxon>Pseudomonadota</taxon>
        <taxon>Alphaproteobacteria</taxon>
        <taxon>Acetobacterales</taxon>
        <taxon>Acetobacteraceae</taxon>
        <taxon>Komagataeibacter</taxon>
    </lineage>
</organism>
<protein>
    <recommendedName>
        <fullName>Cellulose synthase operon protein D</fullName>
    </recommendedName>
</protein>
<dbReference type="EMBL" id="X54676">
    <property type="protein sequence ID" value="CAA38490.1"/>
    <property type="molecule type" value="Genomic_DNA"/>
</dbReference>
<dbReference type="PDB" id="3A8E">
    <property type="method" value="X-ray"/>
    <property type="resolution" value="3.00 A"/>
    <property type="chains" value="A/B/C/D=1-156"/>
</dbReference>
<dbReference type="PDB" id="3AJ1">
    <property type="method" value="X-ray"/>
    <property type="resolution" value="2.50 A"/>
    <property type="chains" value="A/B/C/D/E/F/G/H=1-156"/>
</dbReference>
<dbReference type="PDB" id="3AJ2">
    <property type="method" value="X-ray"/>
    <property type="resolution" value="2.80 A"/>
    <property type="chains" value="A/B/C/D=1-156"/>
</dbReference>
<dbReference type="PDBsum" id="3A8E"/>
<dbReference type="PDBsum" id="3AJ1"/>
<dbReference type="PDBsum" id="3AJ2"/>
<dbReference type="SMR" id="P37719"/>
<dbReference type="DIP" id="DIP-59402N"/>
<dbReference type="UniPathway" id="UPA00694"/>
<dbReference type="EvolutionaryTrace" id="P37719"/>
<dbReference type="GO" id="GO:0042802">
    <property type="term" value="F:identical protein binding"/>
    <property type="evidence" value="ECO:0000353"/>
    <property type="project" value="IntAct"/>
</dbReference>
<dbReference type="GO" id="GO:0030244">
    <property type="term" value="P:cellulose biosynthetic process"/>
    <property type="evidence" value="ECO:0007669"/>
    <property type="project" value="UniProtKB-KW"/>
</dbReference>
<dbReference type="Gene3D" id="1.20.5.3790">
    <property type="match status" value="1"/>
</dbReference>
<dbReference type="Gene3D" id="3.30.70.2590">
    <property type="match status" value="1"/>
</dbReference>
<dbReference type="InterPro" id="IPR022798">
    <property type="entry name" value="BcsD_bac"/>
</dbReference>
<dbReference type="InterPro" id="IPR038470">
    <property type="entry name" value="Cellsynth_D_sf"/>
</dbReference>
<dbReference type="Pfam" id="PF03500">
    <property type="entry name" value="Cellsynth_D"/>
    <property type="match status" value="1"/>
</dbReference>
<dbReference type="PRINTS" id="PR01442">
    <property type="entry name" value="CELLSNTHASED"/>
</dbReference>